<accession>Q15MU3</accession>
<proteinExistence type="inferred from homology"/>
<keyword id="KW-0066">ATP synthesis</keyword>
<keyword id="KW-0997">Cell inner membrane</keyword>
<keyword id="KW-1003">Cell membrane</keyword>
<keyword id="KW-0139">CF(1)</keyword>
<keyword id="KW-0375">Hydrogen ion transport</keyword>
<keyword id="KW-0406">Ion transport</keyword>
<keyword id="KW-0472">Membrane</keyword>
<keyword id="KW-0813">Transport</keyword>
<reference key="1">
    <citation type="submission" date="2006-06" db="EMBL/GenBank/DDBJ databases">
        <title>Complete sequence of Pseudoalteromonas atlantica T6c.</title>
        <authorList>
            <consortium name="US DOE Joint Genome Institute"/>
            <person name="Copeland A."/>
            <person name="Lucas S."/>
            <person name="Lapidus A."/>
            <person name="Barry K."/>
            <person name="Detter J.C."/>
            <person name="Glavina del Rio T."/>
            <person name="Hammon N."/>
            <person name="Israni S."/>
            <person name="Dalin E."/>
            <person name="Tice H."/>
            <person name="Pitluck S."/>
            <person name="Saunders E."/>
            <person name="Brettin T."/>
            <person name="Bruce D."/>
            <person name="Han C."/>
            <person name="Tapia R."/>
            <person name="Gilna P."/>
            <person name="Schmutz J."/>
            <person name="Larimer F."/>
            <person name="Land M."/>
            <person name="Hauser L."/>
            <person name="Kyrpides N."/>
            <person name="Kim E."/>
            <person name="Karls A.C."/>
            <person name="Bartlett D."/>
            <person name="Higgins B.P."/>
            <person name="Richardson P."/>
        </authorList>
    </citation>
    <scope>NUCLEOTIDE SEQUENCE [LARGE SCALE GENOMIC DNA]</scope>
    <source>
        <strain>T6c / ATCC BAA-1087</strain>
    </source>
</reference>
<evidence type="ECO:0000255" key="1">
    <source>
        <dbReference type="HAMAP-Rule" id="MF_00815"/>
    </source>
</evidence>
<sequence length="286" mass="31634">MASGKEIKGKIGSIKNTQKITSAMEMVAASKMKKAQDRMTASRPYAENIRNVIGHLANANLEYRHPYLEDREVKRVGYIVISTDRGLCGGLNTNEFKKVTKDAKKWQEQGVEVDFAALGSKSCAFFNRFGGNMLAAESGLGDAPSVKDVIGLVRIMLNAFNEGKIDRLYLVFNKFVNTMAQEPLIDQLLPLPKSEDKALKHRWDYIYEPDPKPILDTLLVRYIESQVYQGVVENAASEQAARMVAMKAATDNAGDLIDDLQLIYNKARQAAITQEISEIVSGAAAV</sequence>
<gene>
    <name evidence="1" type="primary">atpG</name>
    <name type="ordered locus">Patl_4296</name>
</gene>
<name>ATPG_PSEA6</name>
<feature type="chain" id="PRO_1000053289" description="ATP synthase gamma chain">
    <location>
        <begin position="1"/>
        <end position="286"/>
    </location>
</feature>
<comment type="function">
    <text evidence="1">Produces ATP from ADP in the presence of a proton gradient across the membrane. The gamma chain is believed to be important in regulating ATPase activity and the flow of protons through the CF(0) complex.</text>
</comment>
<comment type="subunit">
    <text evidence="1">F-type ATPases have 2 components, CF(1) - the catalytic core - and CF(0) - the membrane proton channel. CF(1) has five subunits: alpha(3), beta(3), gamma(1), delta(1), epsilon(1). CF(0) has three main subunits: a, b and c.</text>
</comment>
<comment type="subcellular location">
    <subcellularLocation>
        <location evidence="1">Cell inner membrane</location>
        <topology evidence="1">Peripheral membrane protein</topology>
    </subcellularLocation>
</comment>
<comment type="similarity">
    <text evidence="1">Belongs to the ATPase gamma chain family.</text>
</comment>
<dbReference type="EMBL" id="CP000388">
    <property type="protein sequence ID" value="ABG42795.1"/>
    <property type="molecule type" value="Genomic_DNA"/>
</dbReference>
<dbReference type="RefSeq" id="WP_006994922.1">
    <property type="nucleotide sequence ID" value="NC_008228.1"/>
</dbReference>
<dbReference type="SMR" id="Q15MU3"/>
<dbReference type="STRING" id="342610.Patl_4296"/>
<dbReference type="KEGG" id="pat:Patl_4296"/>
<dbReference type="eggNOG" id="COG0224">
    <property type="taxonomic scope" value="Bacteria"/>
</dbReference>
<dbReference type="HOGENOM" id="CLU_050669_0_1_6"/>
<dbReference type="OrthoDB" id="9812769at2"/>
<dbReference type="Proteomes" id="UP000001981">
    <property type="component" value="Chromosome"/>
</dbReference>
<dbReference type="GO" id="GO:0005886">
    <property type="term" value="C:plasma membrane"/>
    <property type="evidence" value="ECO:0007669"/>
    <property type="project" value="UniProtKB-SubCell"/>
</dbReference>
<dbReference type="GO" id="GO:0045259">
    <property type="term" value="C:proton-transporting ATP synthase complex"/>
    <property type="evidence" value="ECO:0007669"/>
    <property type="project" value="UniProtKB-KW"/>
</dbReference>
<dbReference type="GO" id="GO:0005524">
    <property type="term" value="F:ATP binding"/>
    <property type="evidence" value="ECO:0007669"/>
    <property type="project" value="UniProtKB-UniRule"/>
</dbReference>
<dbReference type="GO" id="GO:0046933">
    <property type="term" value="F:proton-transporting ATP synthase activity, rotational mechanism"/>
    <property type="evidence" value="ECO:0007669"/>
    <property type="project" value="UniProtKB-UniRule"/>
</dbReference>
<dbReference type="GO" id="GO:0042777">
    <property type="term" value="P:proton motive force-driven plasma membrane ATP synthesis"/>
    <property type="evidence" value="ECO:0007669"/>
    <property type="project" value="UniProtKB-UniRule"/>
</dbReference>
<dbReference type="CDD" id="cd12151">
    <property type="entry name" value="F1-ATPase_gamma"/>
    <property type="match status" value="1"/>
</dbReference>
<dbReference type="FunFam" id="1.10.287.80:FF:000005">
    <property type="entry name" value="ATP synthase gamma chain"/>
    <property type="match status" value="1"/>
</dbReference>
<dbReference type="FunFam" id="3.40.1380.10:FF:000001">
    <property type="entry name" value="ATP synthase gamma chain"/>
    <property type="match status" value="1"/>
</dbReference>
<dbReference type="Gene3D" id="3.40.1380.10">
    <property type="match status" value="1"/>
</dbReference>
<dbReference type="Gene3D" id="1.10.287.80">
    <property type="entry name" value="ATP synthase, gamma subunit, helix hairpin domain"/>
    <property type="match status" value="1"/>
</dbReference>
<dbReference type="HAMAP" id="MF_00815">
    <property type="entry name" value="ATP_synth_gamma_bact"/>
    <property type="match status" value="1"/>
</dbReference>
<dbReference type="InterPro" id="IPR035968">
    <property type="entry name" value="ATP_synth_F1_ATPase_gsu"/>
</dbReference>
<dbReference type="InterPro" id="IPR000131">
    <property type="entry name" value="ATP_synth_F1_gsu"/>
</dbReference>
<dbReference type="InterPro" id="IPR023632">
    <property type="entry name" value="ATP_synth_F1_gsu_CS"/>
</dbReference>
<dbReference type="NCBIfam" id="TIGR01146">
    <property type="entry name" value="ATPsyn_F1gamma"/>
    <property type="match status" value="1"/>
</dbReference>
<dbReference type="NCBIfam" id="NF004144">
    <property type="entry name" value="PRK05621.1-1"/>
    <property type="match status" value="1"/>
</dbReference>
<dbReference type="PANTHER" id="PTHR11693">
    <property type="entry name" value="ATP SYNTHASE GAMMA CHAIN"/>
    <property type="match status" value="1"/>
</dbReference>
<dbReference type="PANTHER" id="PTHR11693:SF22">
    <property type="entry name" value="ATP SYNTHASE SUBUNIT GAMMA, MITOCHONDRIAL"/>
    <property type="match status" value="1"/>
</dbReference>
<dbReference type="Pfam" id="PF00231">
    <property type="entry name" value="ATP-synt"/>
    <property type="match status" value="1"/>
</dbReference>
<dbReference type="PRINTS" id="PR00126">
    <property type="entry name" value="ATPASEGAMMA"/>
</dbReference>
<dbReference type="SUPFAM" id="SSF52943">
    <property type="entry name" value="ATP synthase (F1-ATPase), gamma subunit"/>
    <property type="match status" value="1"/>
</dbReference>
<dbReference type="PROSITE" id="PS00153">
    <property type="entry name" value="ATPASE_GAMMA"/>
    <property type="match status" value="1"/>
</dbReference>
<protein>
    <recommendedName>
        <fullName evidence="1">ATP synthase gamma chain</fullName>
    </recommendedName>
    <alternativeName>
        <fullName evidence="1">ATP synthase F1 sector gamma subunit</fullName>
    </alternativeName>
    <alternativeName>
        <fullName evidence="1">F-ATPase gamma subunit</fullName>
    </alternativeName>
</protein>
<organism>
    <name type="scientific">Pseudoalteromonas atlantica (strain T6c / ATCC BAA-1087)</name>
    <dbReference type="NCBI Taxonomy" id="3042615"/>
    <lineage>
        <taxon>Bacteria</taxon>
        <taxon>Pseudomonadati</taxon>
        <taxon>Pseudomonadota</taxon>
        <taxon>Gammaproteobacteria</taxon>
        <taxon>Alteromonadales</taxon>
        <taxon>Alteromonadaceae</taxon>
        <taxon>Paraglaciecola</taxon>
    </lineage>
</organism>